<organism>
    <name type="scientific">Mycobacterium tuberculosis (strain CDC 1551 / Oshkosh)</name>
    <dbReference type="NCBI Taxonomy" id="83331"/>
    <lineage>
        <taxon>Bacteria</taxon>
        <taxon>Bacillati</taxon>
        <taxon>Actinomycetota</taxon>
        <taxon>Actinomycetes</taxon>
        <taxon>Mycobacteriales</taxon>
        <taxon>Mycobacteriaceae</taxon>
        <taxon>Mycobacterium</taxon>
        <taxon>Mycobacterium tuberculosis complex</taxon>
    </lineage>
</organism>
<protein>
    <recommendedName>
        <fullName>Uncharacterized protein MT1315</fullName>
    </recommendedName>
</protein>
<reference key="1">
    <citation type="journal article" date="2002" name="J. Bacteriol.">
        <title>Whole-genome comparison of Mycobacterium tuberculosis clinical and laboratory strains.</title>
        <authorList>
            <person name="Fleischmann R.D."/>
            <person name="Alland D."/>
            <person name="Eisen J.A."/>
            <person name="Carpenter L."/>
            <person name="White O."/>
            <person name="Peterson J.D."/>
            <person name="DeBoy R.T."/>
            <person name="Dodson R.J."/>
            <person name="Gwinn M.L."/>
            <person name="Haft D.H."/>
            <person name="Hickey E.K."/>
            <person name="Kolonay J.F."/>
            <person name="Nelson W.C."/>
            <person name="Umayam L.A."/>
            <person name="Ermolaeva M.D."/>
            <person name="Salzberg S.L."/>
            <person name="Delcher A."/>
            <person name="Utterback T.R."/>
            <person name="Weidman J.F."/>
            <person name="Khouri H.M."/>
            <person name="Gill J."/>
            <person name="Mikula A."/>
            <person name="Bishai W."/>
            <person name="Jacobs W.R. Jr."/>
            <person name="Venter J.C."/>
            <person name="Fraser C.M."/>
        </authorList>
    </citation>
    <scope>NUCLEOTIDE SEQUENCE [LARGE SCALE GENOMIC DNA]</scope>
    <source>
        <strain>CDC 1551 / Oshkosh</strain>
    </source>
</reference>
<proteinExistence type="predicted"/>
<dbReference type="EMBL" id="AE000516">
    <property type="protein sequence ID" value="AAK45576.1"/>
    <property type="molecule type" value="Genomic_DNA"/>
</dbReference>
<dbReference type="PIR" id="F70755">
    <property type="entry name" value="F70755"/>
</dbReference>
<dbReference type="RefSeq" id="WP_003898806.1">
    <property type="nucleotide sequence ID" value="NZ_KK341227.1"/>
</dbReference>
<dbReference type="KEGG" id="mtc:MT1315"/>
<dbReference type="PATRIC" id="fig|83331.31.peg.1421"/>
<dbReference type="HOGENOM" id="CLU_015046_1_0_11"/>
<dbReference type="Proteomes" id="UP000001020">
    <property type="component" value="Chromosome"/>
</dbReference>
<dbReference type="Gene3D" id="3.40.50.300">
    <property type="entry name" value="P-loop containing nucleotide triphosphate hydrolases"/>
    <property type="match status" value="2"/>
</dbReference>
<dbReference type="InterPro" id="IPR041685">
    <property type="entry name" value="AAA_GajA/Old/RecF-like"/>
</dbReference>
<dbReference type="InterPro" id="IPR027417">
    <property type="entry name" value="P-loop_NTPase"/>
</dbReference>
<dbReference type="PANTHER" id="PTHR41259">
    <property type="entry name" value="DOUBLE-STRAND BREAK REPAIR RAD50 ATPASE, PUTATIVE-RELATED"/>
    <property type="match status" value="1"/>
</dbReference>
<dbReference type="PANTHER" id="PTHR41259:SF1">
    <property type="entry name" value="DOUBLE-STRAND BREAK REPAIR RAD50 ATPASE, PUTATIVE-RELATED"/>
    <property type="match status" value="1"/>
</dbReference>
<dbReference type="Pfam" id="PF13175">
    <property type="entry name" value="AAA_15"/>
    <property type="match status" value="1"/>
</dbReference>
<dbReference type="SUPFAM" id="SSF52540">
    <property type="entry name" value="P-loop containing nucleoside triphosphate hydrolases"/>
    <property type="match status" value="1"/>
</dbReference>
<accession>P9WM40</accession>
<accession>L0T8X0</accession>
<accession>P64795</accession>
<accession>Q11042</accession>
<feature type="chain" id="PRO_0000427370" description="Uncharacterized protein MT1315">
    <location>
        <begin position="1"/>
        <end position="875"/>
    </location>
</feature>
<gene>
    <name type="ordered locus">MT1315</name>
</gene>
<keyword id="KW-1185">Reference proteome</keyword>
<sequence>MKLHRLALTNYRGIAHRDVEFPDHGVVVVCGANEIGKSSMVEALDLLLEYKDRSTKKEVKQVKPTNADVGSEVIAEISSGPYRFVYRKRFHKRCETELTVLAPRREQLTGDEAHERVRTMLAETVDTELWHAQRVLQAASTAAVDLSGCDALSRALDLAAGDDAALSGTESLLIERIEAEYARYFTPTGRPTGEWSAAVSRLAAAEAAVADCAAAVAEVDDGVRRHTELTEQVAELSQQLLAHQLRLEAARVAAEKIAAITDDAREAKLIATAAAATSGASTAAHAGRLGLLTEIDTRTAAVVAAEAKARQAADEQATARAEAEACDAALTEATQVLTAVRLRAESARRTLDQLADCEEADRLAARLARIDDIEGDRDRVCAELSAVTLTEELLSRIERAAAAVDRGGAQLASISAAVEFTAAVDIELGVGDQRVSLSAGQSWSVTATGPTEVKVPGVLTARIVPGATALDFQAKYAAAQQELADALAAGEVADLAAARSADLCRRELLSRRDQLTATLAGLCGDEQVDQLRSRLEQLCAGQPAELDLVSTDTATARAELDAVEAARIAAEKDCETRRQIAAGAARRLAETSTRATVLQNAAAAESAELGAAMTRLACERASVGDDELAAKAEADLRVLQTAEQRVIDLADELAATAPDAVAAELAEAADAVELLRERHDEAIRALHEVGVELSVFGTQGRKGKLDAAETEREHAASHHARVGRRARAARLLRSVMARHRDTTRLRYVEPYRAELHRLGRPVFGPSFEVEVDTDLRIRSRTLDDRTVPYECLSGGAKEQLGILARLAGAALVAKEDAVPVLIDDALGFTDPERLAKMGEVFDTIGADGQVIVLTCSPTRYGGVKGAHRIDLDAIQ</sequence>
<name>Y1278_MYCTO</name>